<name>RIBB_YERPP</name>
<evidence type="ECO:0000255" key="1">
    <source>
        <dbReference type="HAMAP-Rule" id="MF_00180"/>
    </source>
</evidence>
<keyword id="KW-0456">Lyase</keyword>
<keyword id="KW-0460">Magnesium</keyword>
<keyword id="KW-0464">Manganese</keyword>
<keyword id="KW-0479">Metal-binding</keyword>
<keyword id="KW-0686">Riboflavin biosynthesis</keyword>
<organism>
    <name type="scientific">Yersinia pestis (strain Pestoides F)</name>
    <dbReference type="NCBI Taxonomy" id="386656"/>
    <lineage>
        <taxon>Bacteria</taxon>
        <taxon>Pseudomonadati</taxon>
        <taxon>Pseudomonadota</taxon>
        <taxon>Gammaproteobacteria</taxon>
        <taxon>Enterobacterales</taxon>
        <taxon>Yersiniaceae</taxon>
        <taxon>Yersinia</taxon>
    </lineage>
</organism>
<reference key="1">
    <citation type="submission" date="2007-02" db="EMBL/GenBank/DDBJ databases">
        <title>Complete sequence of chromosome of Yersinia pestis Pestoides F.</title>
        <authorList>
            <consortium name="US DOE Joint Genome Institute"/>
            <person name="Copeland A."/>
            <person name="Lucas S."/>
            <person name="Lapidus A."/>
            <person name="Barry K."/>
            <person name="Detter J.C."/>
            <person name="Glavina del Rio T."/>
            <person name="Hammon N."/>
            <person name="Israni S."/>
            <person name="Dalin E."/>
            <person name="Tice H."/>
            <person name="Pitluck S."/>
            <person name="Di Bartolo G."/>
            <person name="Chain P."/>
            <person name="Malfatti S."/>
            <person name="Shin M."/>
            <person name="Vergez L."/>
            <person name="Schmutz J."/>
            <person name="Larimer F."/>
            <person name="Land M."/>
            <person name="Hauser L."/>
            <person name="Worsham P."/>
            <person name="Chu M."/>
            <person name="Bearden S."/>
            <person name="Garcia E."/>
            <person name="Richardson P."/>
        </authorList>
    </citation>
    <scope>NUCLEOTIDE SEQUENCE [LARGE SCALE GENOMIC DNA]</scope>
    <source>
        <strain>Pestoides F</strain>
    </source>
</reference>
<accession>A4THU2</accession>
<gene>
    <name evidence="1" type="primary">ribB</name>
    <name type="ordered locus">YPDSF_0441</name>
</gene>
<sequence>MNQTLLSDFGTPVERVERAIDALRNGRGVMVLDDESRENEGDMVFAAEAMTLEQMALTIRHGSGIVCLCITDERRQQLDLPMMVTHNSSQFQTAFTVTIEAAEGVTTGVSAADRLTTIRKAIADNAKPADLNRPGHVFPLRGQPGGVLSRRGHTEASIDLATLAGYKPAGVLCELTNDDGSMAHAPEVIAFAKLHDMPVVTIDDLAAYLQSRAKKAS</sequence>
<comment type="function">
    <text evidence="1">Catalyzes the conversion of D-ribulose 5-phosphate to formate and 3,4-dihydroxy-2-butanone 4-phosphate.</text>
</comment>
<comment type="catalytic activity">
    <reaction evidence="1">
        <text>D-ribulose 5-phosphate = (2S)-2-hydroxy-3-oxobutyl phosphate + formate + H(+)</text>
        <dbReference type="Rhea" id="RHEA:18457"/>
        <dbReference type="ChEBI" id="CHEBI:15378"/>
        <dbReference type="ChEBI" id="CHEBI:15740"/>
        <dbReference type="ChEBI" id="CHEBI:58121"/>
        <dbReference type="ChEBI" id="CHEBI:58830"/>
        <dbReference type="EC" id="4.1.99.12"/>
    </reaction>
</comment>
<comment type="cofactor">
    <cofactor evidence="1">
        <name>Mg(2+)</name>
        <dbReference type="ChEBI" id="CHEBI:18420"/>
    </cofactor>
    <cofactor evidence="1">
        <name>Mn(2+)</name>
        <dbReference type="ChEBI" id="CHEBI:29035"/>
    </cofactor>
    <text evidence="1">Binds 2 divalent metal cations per subunit. Magnesium or manganese.</text>
</comment>
<comment type="pathway">
    <text evidence="1">Cofactor biosynthesis; riboflavin biosynthesis; 2-hydroxy-3-oxobutyl phosphate from D-ribulose 5-phosphate: step 1/1.</text>
</comment>
<comment type="subunit">
    <text evidence="1">Homodimer.</text>
</comment>
<comment type="similarity">
    <text evidence="1">Belongs to the DHBP synthase family.</text>
</comment>
<proteinExistence type="inferred from homology"/>
<dbReference type="EC" id="4.1.99.12" evidence="1"/>
<dbReference type="EMBL" id="CP000668">
    <property type="protein sequence ID" value="ABP38854.1"/>
    <property type="molecule type" value="Genomic_DNA"/>
</dbReference>
<dbReference type="RefSeq" id="WP_002212190.1">
    <property type="nucleotide sequence ID" value="NZ_CP009715.1"/>
</dbReference>
<dbReference type="SMR" id="A4THU2"/>
<dbReference type="GeneID" id="57973967"/>
<dbReference type="KEGG" id="ypp:YPDSF_0441"/>
<dbReference type="PATRIC" id="fig|386656.14.peg.1749"/>
<dbReference type="UniPathway" id="UPA00275">
    <property type="reaction ID" value="UER00399"/>
</dbReference>
<dbReference type="GO" id="GO:0005829">
    <property type="term" value="C:cytosol"/>
    <property type="evidence" value="ECO:0007669"/>
    <property type="project" value="TreeGrafter"/>
</dbReference>
<dbReference type="GO" id="GO:0008686">
    <property type="term" value="F:3,4-dihydroxy-2-butanone-4-phosphate synthase activity"/>
    <property type="evidence" value="ECO:0007669"/>
    <property type="project" value="UniProtKB-UniRule"/>
</dbReference>
<dbReference type="GO" id="GO:0000287">
    <property type="term" value="F:magnesium ion binding"/>
    <property type="evidence" value="ECO:0007669"/>
    <property type="project" value="UniProtKB-UniRule"/>
</dbReference>
<dbReference type="GO" id="GO:0030145">
    <property type="term" value="F:manganese ion binding"/>
    <property type="evidence" value="ECO:0007669"/>
    <property type="project" value="UniProtKB-UniRule"/>
</dbReference>
<dbReference type="GO" id="GO:0009231">
    <property type="term" value="P:riboflavin biosynthetic process"/>
    <property type="evidence" value="ECO:0007669"/>
    <property type="project" value="UniProtKB-UniRule"/>
</dbReference>
<dbReference type="FunFam" id="3.90.870.10:FF:000002">
    <property type="entry name" value="3,4-dihydroxy-2-butanone 4-phosphate synthase"/>
    <property type="match status" value="1"/>
</dbReference>
<dbReference type="Gene3D" id="3.90.870.10">
    <property type="entry name" value="DHBP synthase"/>
    <property type="match status" value="1"/>
</dbReference>
<dbReference type="HAMAP" id="MF_00180">
    <property type="entry name" value="RibB"/>
    <property type="match status" value="1"/>
</dbReference>
<dbReference type="InterPro" id="IPR017945">
    <property type="entry name" value="DHBP_synth_RibB-like_a/b_dom"/>
</dbReference>
<dbReference type="InterPro" id="IPR000422">
    <property type="entry name" value="DHBP_synthase_RibB"/>
</dbReference>
<dbReference type="NCBIfam" id="TIGR00506">
    <property type="entry name" value="ribB"/>
    <property type="match status" value="1"/>
</dbReference>
<dbReference type="PANTHER" id="PTHR21327:SF38">
    <property type="entry name" value="3,4-DIHYDROXY-2-BUTANONE 4-PHOSPHATE SYNTHASE"/>
    <property type="match status" value="1"/>
</dbReference>
<dbReference type="PANTHER" id="PTHR21327">
    <property type="entry name" value="GTP CYCLOHYDROLASE II-RELATED"/>
    <property type="match status" value="1"/>
</dbReference>
<dbReference type="Pfam" id="PF00926">
    <property type="entry name" value="DHBP_synthase"/>
    <property type="match status" value="1"/>
</dbReference>
<dbReference type="SUPFAM" id="SSF55821">
    <property type="entry name" value="YrdC/RibB"/>
    <property type="match status" value="1"/>
</dbReference>
<protein>
    <recommendedName>
        <fullName evidence="1">3,4-dihydroxy-2-butanone 4-phosphate synthase</fullName>
        <shortName evidence="1">DHBP synthase</shortName>
        <ecNumber evidence="1">4.1.99.12</ecNumber>
    </recommendedName>
</protein>
<feature type="chain" id="PRO_1000040642" description="3,4-dihydroxy-2-butanone 4-phosphate synthase">
    <location>
        <begin position="1"/>
        <end position="217"/>
    </location>
</feature>
<feature type="binding site" evidence="1">
    <location>
        <begin position="37"/>
        <end position="38"/>
    </location>
    <ligand>
        <name>D-ribulose 5-phosphate</name>
        <dbReference type="ChEBI" id="CHEBI:58121"/>
    </ligand>
</feature>
<feature type="binding site" evidence="1">
    <location>
        <position position="38"/>
    </location>
    <ligand>
        <name>Mg(2+)</name>
        <dbReference type="ChEBI" id="CHEBI:18420"/>
        <label>1</label>
    </ligand>
</feature>
<feature type="binding site" evidence="1">
    <location>
        <position position="38"/>
    </location>
    <ligand>
        <name>Mg(2+)</name>
        <dbReference type="ChEBI" id="CHEBI:18420"/>
        <label>2</label>
    </ligand>
</feature>
<feature type="binding site" evidence="1">
    <location>
        <position position="42"/>
    </location>
    <ligand>
        <name>D-ribulose 5-phosphate</name>
        <dbReference type="ChEBI" id="CHEBI:58121"/>
    </ligand>
</feature>
<feature type="binding site" evidence="1">
    <location>
        <begin position="150"/>
        <end position="154"/>
    </location>
    <ligand>
        <name>D-ribulose 5-phosphate</name>
        <dbReference type="ChEBI" id="CHEBI:58121"/>
    </ligand>
</feature>
<feature type="binding site" evidence="1">
    <location>
        <position position="153"/>
    </location>
    <ligand>
        <name>Mg(2+)</name>
        <dbReference type="ChEBI" id="CHEBI:18420"/>
        <label>2</label>
    </ligand>
</feature>
<feature type="binding site" evidence="1">
    <location>
        <position position="174"/>
    </location>
    <ligand>
        <name>D-ribulose 5-phosphate</name>
        <dbReference type="ChEBI" id="CHEBI:58121"/>
    </ligand>
</feature>
<feature type="site" description="Essential for catalytic activity" evidence="1">
    <location>
        <position position="136"/>
    </location>
</feature>
<feature type="site" description="Essential for catalytic activity" evidence="1">
    <location>
        <position position="174"/>
    </location>
</feature>